<gene>
    <name evidence="1" type="primary">tsf</name>
    <name type="ordered locus">Bpro_2694</name>
</gene>
<comment type="function">
    <text evidence="1">Associates with the EF-Tu.GDP complex and induces the exchange of GDP to GTP. It remains bound to the aminoacyl-tRNA.EF-Tu.GTP complex up to the GTP hydrolysis stage on the ribosome.</text>
</comment>
<comment type="subcellular location">
    <subcellularLocation>
        <location evidence="1">Cytoplasm</location>
    </subcellularLocation>
</comment>
<comment type="similarity">
    <text evidence="1">Belongs to the EF-Ts family.</text>
</comment>
<evidence type="ECO:0000255" key="1">
    <source>
        <dbReference type="HAMAP-Rule" id="MF_00050"/>
    </source>
</evidence>
<proteinExistence type="inferred from homology"/>
<feature type="chain" id="PRO_0000323462" description="Elongation factor Ts">
    <location>
        <begin position="1"/>
        <end position="304"/>
    </location>
</feature>
<feature type="region of interest" description="Involved in Mg(2+) ion dislocation from EF-Tu" evidence="1">
    <location>
        <begin position="79"/>
        <end position="82"/>
    </location>
</feature>
<keyword id="KW-0963">Cytoplasm</keyword>
<keyword id="KW-0251">Elongation factor</keyword>
<keyword id="KW-0648">Protein biosynthesis</keyword>
<keyword id="KW-1185">Reference proteome</keyword>
<name>EFTS_POLSJ</name>
<accession>Q12A32</accession>
<protein>
    <recommendedName>
        <fullName evidence="1">Elongation factor Ts</fullName>
        <shortName evidence="1">EF-Ts</shortName>
    </recommendedName>
</protein>
<sequence>MAITASMVAELRAKTDAPMMECKKALTEADGNFEKAEEILRVKLGNKAGKAASRVTAEGVIAYHSEGGIGALVEINCETDFVTKNDSFLAFTKAVAEGIVKNNPADVDAIGAMALSLDGFGPTVEDVRKGLIGKIGENMSVRRFKRFAGSKLASYLHGTRIGVVVEFDGDETAAKDVAMHVAAMKPVSLSSADVPADLVAKERSVAAAKAAEDAAKAQAEGKPVQSAEIVAKRIDGGVQKYLKEVSLYNQSFVKNDKQTVEQMLKERATTVKSFTLYVVGEGIEKKADDFAAEVAAQIAAAKAA</sequence>
<reference key="1">
    <citation type="journal article" date="2008" name="Appl. Environ. Microbiol.">
        <title>The genome of Polaromonas sp. strain JS666: insights into the evolution of a hydrocarbon- and xenobiotic-degrading bacterium, and features of relevance to biotechnology.</title>
        <authorList>
            <person name="Mattes T.E."/>
            <person name="Alexander A.K."/>
            <person name="Richardson P.M."/>
            <person name="Munk A.C."/>
            <person name="Han C.S."/>
            <person name="Stothard P."/>
            <person name="Coleman N.V."/>
        </authorList>
    </citation>
    <scope>NUCLEOTIDE SEQUENCE [LARGE SCALE GENOMIC DNA]</scope>
    <source>
        <strain>JS666 / ATCC BAA-500</strain>
    </source>
</reference>
<dbReference type="EMBL" id="CP000316">
    <property type="protein sequence ID" value="ABE44610.1"/>
    <property type="molecule type" value="Genomic_DNA"/>
</dbReference>
<dbReference type="RefSeq" id="WP_011483608.1">
    <property type="nucleotide sequence ID" value="NC_007948.1"/>
</dbReference>
<dbReference type="SMR" id="Q12A32"/>
<dbReference type="STRING" id="296591.Bpro_2694"/>
<dbReference type="KEGG" id="pol:Bpro_2694"/>
<dbReference type="eggNOG" id="COG0264">
    <property type="taxonomic scope" value="Bacteria"/>
</dbReference>
<dbReference type="HOGENOM" id="CLU_047155_0_2_4"/>
<dbReference type="OrthoDB" id="9808348at2"/>
<dbReference type="Proteomes" id="UP000001983">
    <property type="component" value="Chromosome"/>
</dbReference>
<dbReference type="GO" id="GO:0005737">
    <property type="term" value="C:cytoplasm"/>
    <property type="evidence" value="ECO:0007669"/>
    <property type="project" value="UniProtKB-SubCell"/>
</dbReference>
<dbReference type="GO" id="GO:0003746">
    <property type="term" value="F:translation elongation factor activity"/>
    <property type="evidence" value="ECO:0007669"/>
    <property type="project" value="UniProtKB-UniRule"/>
</dbReference>
<dbReference type="CDD" id="cd14275">
    <property type="entry name" value="UBA_EF-Ts"/>
    <property type="match status" value="1"/>
</dbReference>
<dbReference type="FunFam" id="1.10.8.10:FF:000001">
    <property type="entry name" value="Elongation factor Ts"/>
    <property type="match status" value="1"/>
</dbReference>
<dbReference type="Gene3D" id="1.10.286.20">
    <property type="match status" value="1"/>
</dbReference>
<dbReference type="Gene3D" id="1.10.8.10">
    <property type="entry name" value="DNA helicase RuvA subunit, C-terminal domain"/>
    <property type="match status" value="1"/>
</dbReference>
<dbReference type="Gene3D" id="3.30.479.20">
    <property type="entry name" value="Elongation factor Ts, dimerisation domain"/>
    <property type="match status" value="2"/>
</dbReference>
<dbReference type="HAMAP" id="MF_00050">
    <property type="entry name" value="EF_Ts"/>
    <property type="match status" value="1"/>
</dbReference>
<dbReference type="InterPro" id="IPR036402">
    <property type="entry name" value="EF-Ts_dimer_sf"/>
</dbReference>
<dbReference type="InterPro" id="IPR001816">
    <property type="entry name" value="Transl_elong_EFTs/EF1B"/>
</dbReference>
<dbReference type="InterPro" id="IPR014039">
    <property type="entry name" value="Transl_elong_EFTs/EF1B_dimer"/>
</dbReference>
<dbReference type="InterPro" id="IPR018101">
    <property type="entry name" value="Transl_elong_Ts_CS"/>
</dbReference>
<dbReference type="InterPro" id="IPR009060">
    <property type="entry name" value="UBA-like_sf"/>
</dbReference>
<dbReference type="NCBIfam" id="TIGR00116">
    <property type="entry name" value="tsf"/>
    <property type="match status" value="1"/>
</dbReference>
<dbReference type="PANTHER" id="PTHR11741">
    <property type="entry name" value="ELONGATION FACTOR TS"/>
    <property type="match status" value="1"/>
</dbReference>
<dbReference type="PANTHER" id="PTHR11741:SF0">
    <property type="entry name" value="ELONGATION FACTOR TS, MITOCHONDRIAL"/>
    <property type="match status" value="1"/>
</dbReference>
<dbReference type="Pfam" id="PF00889">
    <property type="entry name" value="EF_TS"/>
    <property type="match status" value="1"/>
</dbReference>
<dbReference type="SUPFAM" id="SSF54713">
    <property type="entry name" value="Elongation factor Ts (EF-Ts), dimerisation domain"/>
    <property type="match status" value="2"/>
</dbReference>
<dbReference type="SUPFAM" id="SSF46934">
    <property type="entry name" value="UBA-like"/>
    <property type="match status" value="1"/>
</dbReference>
<dbReference type="PROSITE" id="PS01127">
    <property type="entry name" value="EF_TS_2"/>
    <property type="match status" value="1"/>
</dbReference>
<organism>
    <name type="scientific">Polaromonas sp. (strain JS666 / ATCC BAA-500)</name>
    <dbReference type="NCBI Taxonomy" id="296591"/>
    <lineage>
        <taxon>Bacteria</taxon>
        <taxon>Pseudomonadati</taxon>
        <taxon>Pseudomonadota</taxon>
        <taxon>Betaproteobacteria</taxon>
        <taxon>Burkholderiales</taxon>
        <taxon>Comamonadaceae</taxon>
        <taxon>Polaromonas</taxon>
    </lineage>
</organism>